<keyword id="KW-1015">Disulfide bond</keyword>
<keyword id="KW-0574">Periplasm</keyword>
<keyword id="KW-0732">Signal</keyword>
<keyword id="KW-0813">Transport</keyword>
<name>OCCT_RHIML</name>
<feature type="signal peptide" evidence="2">
    <location>
        <begin position="1"/>
        <end position="20"/>
    </location>
</feature>
<feature type="chain" id="PRO_0000031770" description="Octopine-binding periplasmic protein">
    <location>
        <begin position="21"/>
        <end position="294"/>
    </location>
</feature>
<feature type="disulfide bond" evidence="1">
    <location>
        <begin position="57"/>
        <end position="64"/>
    </location>
</feature>
<sequence>MRLKSIMCAALFVVAGQAAAQEKSITIATEGAYAPWNFSGPNGKLDGFEIDLAKVLCERMKVKCQIVAQNWDGIIPSLVAKKYDVIMAAMSVTPKRQEVISFSTPYGAHMNGFAVMKDSKLADMPGSGEVYSLNTQADAAKKRIDDVNAFLDGTTVGVQGSTTGSQFLENYFKNSVDIKEYKTVEEFNIDLMSGRVDAVFASATVLTAAFEQPDMKDAKVVGPLFSGDELGKVAVGLRKDDAALKAEFRLGAVGLRKEDAALKADFDSSIKAVADEGTIKTLSSKWFKVDVTPH</sequence>
<dbReference type="EMBL" id="U66830">
    <property type="protein sequence ID" value="AAB07521.1"/>
    <property type="molecule type" value="Genomic_DNA"/>
</dbReference>
<dbReference type="SMR" id="P72298"/>
<dbReference type="GO" id="GO:0016020">
    <property type="term" value="C:membrane"/>
    <property type="evidence" value="ECO:0007669"/>
    <property type="project" value="InterPro"/>
</dbReference>
<dbReference type="GO" id="GO:0030288">
    <property type="term" value="C:outer membrane-bounded periplasmic space"/>
    <property type="evidence" value="ECO:0007669"/>
    <property type="project" value="InterPro"/>
</dbReference>
<dbReference type="GO" id="GO:0015276">
    <property type="term" value="F:ligand-gated monoatomic ion channel activity"/>
    <property type="evidence" value="ECO:0007669"/>
    <property type="project" value="InterPro"/>
</dbReference>
<dbReference type="CDD" id="cd13699">
    <property type="entry name" value="PBP2_OccT_like"/>
    <property type="match status" value="1"/>
</dbReference>
<dbReference type="Gene3D" id="3.40.190.10">
    <property type="entry name" value="Periplasmic binding protein-like II"/>
    <property type="match status" value="3"/>
</dbReference>
<dbReference type="InterPro" id="IPR001320">
    <property type="entry name" value="Iontro_rcpt_C"/>
</dbReference>
<dbReference type="InterPro" id="IPR005768">
    <property type="entry name" value="Lys_Arg_Orn-bd"/>
</dbReference>
<dbReference type="InterPro" id="IPR018313">
    <property type="entry name" value="SBP_3_CS"/>
</dbReference>
<dbReference type="InterPro" id="IPR001638">
    <property type="entry name" value="Solute-binding_3/MltF_N"/>
</dbReference>
<dbReference type="NCBIfam" id="TIGR01096">
    <property type="entry name" value="3A0103s03R"/>
    <property type="match status" value="1"/>
</dbReference>
<dbReference type="PANTHER" id="PTHR35936:SF19">
    <property type="entry name" value="AMINO-ACID-BINDING PROTEIN YXEM-RELATED"/>
    <property type="match status" value="1"/>
</dbReference>
<dbReference type="PANTHER" id="PTHR35936">
    <property type="entry name" value="MEMBRANE-BOUND LYTIC MUREIN TRANSGLYCOSYLASE F"/>
    <property type="match status" value="1"/>
</dbReference>
<dbReference type="Pfam" id="PF00497">
    <property type="entry name" value="SBP_bac_3"/>
    <property type="match status" value="1"/>
</dbReference>
<dbReference type="SMART" id="SM00062">
    <property type="entry name" value="PBPb"/>
    <property type="match status" value="1"/>
</dbReference>
<dbReference type="SMART" id="SM00079">
    <property type="entry name" value="PBPe"/>
    <property type="match status" value="1"/>
</dbReference>
<dbReference type="SUPFAM" id="SSF53850">
    <property type="entry name" value="Periplasmic binding protein-like II"/>
    <property type="match status" value="1"/>
</dbReference>
<dbReference type="PROSITE" id="PS01039">
    <property type="entry name" value="SBP_BACTERIAL_3"/>
    <property type="match status" value="1"/>
</dbReference>
<protein>
    <recommendedName>
        <fullName>Octopine-binding periplasmic protein</fullName>
    </recommendedName>
</protein>
<reference key="1">
    <citation type="submission" date="1996-08" db="EMBL/GenBank/DDBJ databases">
        <title>The octopine catabolism operon of Rhizobium meliloti A3.</title>
        <authorList>
            <person name="Au S."/>
            <person name="Bergeron J."/>
            <person name="Dion P."/>
        </authorList>
    </citation>
    <scope>NUCLEOTIDE SEQUENCE [GENOMIC DNA]</scope>
    <source>
        <strain>A3</strain>
    </source>
</reference>
<organism>
    <name type="scientific">Rhizobium meliloti</name>
    <name type="common">Ensifer meliloti</name>
    <name type="synonym">Sinorhizobium meliloti</name>
    <dbReference type="NCBI Taxonomy" id="382"/>
    <lineage>
        <taxon>Bacteria</taxon>
        <taxon>Pseudomonadati</taxon>
        <taxon>Pseudomonadota</taxon>
        <taxon>Alphaproteobacteria</taxon>
        <taxon>Hyphomicrobiales</taxon>
        <taxon>Rhizobiaceae</taxon>
        <taxon>Sinorhizobium/Ensifer group</taxon>
        <taxon>Sinorhizobium</taxon>
    </lineage>
</organism>
<gene>
    <name type="primary">occT</name>
</gene>
<proteinExistence type="inferred from homology"/>
<evidence type="ECO:0000250" key="1"/>
<evidence type="ECO:0000255" key="2"/>
<evidence type="ECO:0000305" key="3"/>
<comment type="function">
    <text>Component of the octopine active transport system probably consisting of four subunits: Q, M, P and T.</text>
</comment>
<comment type="subcellular location">
    <subcellularLocation>
        <location>Periplasm</location>
    </subcellularLocation>
</comment>
<comment type="similarity">
    <text evidence="3">Belongs to the bacterial solute-binding protein 3 family.</text>
</comment>
<accession>P72298</accession>